<keyword id="KW-1185">Reference proteome</keyword>
<gene>
    <name type="ordered locus">asr0105</name>
</gene>
<accession>Q8Z0I8</accession>
<name>Y105_NOSS1</name>
<proteinExistence type="inferred from homology"/>
<organism>
    <name type="scientific">Nostoc sp. (strain PCC 7120 / SAG 25.82 / UTEX 2576)</name>
    <dbReference type="NCBI Taxonomy" id="103690"/>
    <lineage>
        <taxon>Bacteria</taxon>
        <taxon>Bacillati</taxon>
        <taxon>Cyanobacteriota</taxon>
        <taxon>Cyanophyceae</taxon>
        <taxon>Nostocales</taxon>
        <taxon>Nostocaceae</taxon>
        <taxon>Nostoc</taxon>
    </lineage>
</organism>
<evidence type="ECO:0000255" key="1">
    <source>
        <dbReference type="HAMAP-Rule" id="MF_01503"/>
    </source>
</evidence>
<feature type="chain" id="PRO_0000050215" description="Putative regulatory protein asr0105">
    <location>
        <begin position="1"/>
        <end position="88"/>
    </location>
</feature>
<sequence length="88" mass="9739">MEIQLINIGFGNIVSANRVVAIVSPESAPIKRIITDARDKNQLIDATYGRRTRAVIITDSSHVILSAIQPETVANRFVISREHQSVEN</sequence>
<dbReference type="EMBL" id="BA000019">
    <property type="protein sequence ID" value="BAB77629.1"/>
    <property type="molecule type" value="Genomic_DNA"/>
</dbReference>
<dbReference type="PIR" id="AI1819">
    <property type="entry name" value="AI1819"/>
</dbReference>
<dbReference type="SMR" id="Q8Z0I8"/>
<dbReference type="STRING" id="103690.gene:10492109"/>
<dbReference type="KEGG" id="ana:asr0105"/>
<dbReference type="eggNOG" id="COG2052">
    <property type="taxonomic scope" value="Bacteria"/>
</dbReference>
<dbReference type="OrthoDB" id="5432174at2"/>
<dbReference type="Proteomes" id="UP000002483">
    <property type="component" value="Chromosome"/>
</dbReference>
<dbReference type="HAMAP" id="MF_01503">
    <property type="entry name" value="RemA"/>
    <property type="match status" value="1"/>
</dbReference>
<dbReference type="InterPro" id="IPR007169">
    <property type="entry name" value="RemA-like"/>
</dbReference>
<dbReference type="NCBIfam" id="NF046064">
    <property type="entry name" value="MtxBflmRegRemA"/>
    <property type="match status" value="1"/>
</dbReference>
<dbReference type="NCBIfam" id="NF003315">
    <property type="entry name" value="PRK04323.1"/>
    <property type="match status" value="1"/>
</dbReference>
<dbReference type="PANTHER" id="PTHR38449:SF1">
    <property type="entry name" value="REGULATORY PROTEIN SSL2874-RELATED"/>
    <property type="match status" value="1"/>
</dbReference>
<dbReference type="PANTHER" id="PTHR38449">
    <property type="entry name" value="REGULATORY PROTEIN TM_1690-RELATED"/>
    <property type="match status" value="1"/>
</dbReference>
<dbReference type="Pfam" id="PF04025">
    <property type="entry name" value="RemA-like"/>
    <property type="match status" value="1"/>
</dbReference>
<protein>
    <recommendedName>
        <fullName evidence="1">Putative regulatory protein asr0105</fullName>
    </recommendedName>
</protein>
<reference key="1">
    <citation type="journal article" date="2001" name="DNA Res.">
        <title>Complete genomic sequence of the filamentous nitrogen-fixing cyanobacterium Anabaena sp. strain PCC 7120.</title>
        <authorList>
            <person name="Kaneko T."/>
            <person name="Nakamura Y."/>
            <person name="Wolk C.P."/>
            <person name="Kuritz T."/>
            <person name="Sasamoto S."/>
            <person name="Watanabe A."/>
            <person name="Iriguchi M."/>
            <person name="Ishikawa A."/>
            <person name="Kawashima K."/>
            <person name="Kimura T."/>
            <person name="Kishida Y."/>
            <person name="Kohara M."/>
            <person name="Matsumoto M."/>
            <person name="Matsuno A."/>
            <person name="Muraki A."/>
            <person name="Nakazaki N."/>
            <person name="Shimpo S."/>
            <person name="Sugimoto M."/>
            <person name="Takazawa M."/>
            <person name="Yamada M."/>
            <person name="Yasuda M."/>
            <person name="Tabata S."/>
        </authorList>
    </citation>
    <scope>NUCLEOTIDE SEQUENCE [LARGE SCALE GENOMIC DNA]</scope>
    <source>
        <strain>PCC 7120 / SAG 25.82 / UTEX 2576</strain>
    </source>
</reference>
<comment type="similarity">
    <text evidence="1">Belongs to the RemA family.</text>
</comment>